<feature type="chain" id="PRO_0000328356" description="Vacuolin-B">
    <location>
        <begin position="1"/>
        <end position="592"/>
    </location>
</feature>
<feature type="region of interest" description="Disordered" evidence="2">
    <location>
        <begin position="1"/>
        <end position="35"/>
    </location>
</feature>
<feature type="region of interest" description="Oligomerization domain">
    <location>
        <begin position="491"/>
        <end position="555"/>
    </location>
</feature>
<feature type="coiled-coil region" evidence="1">
    <location>
        <begin position="480"/>
        <end position="534"/>
    </location>
</feature>
<feature type="compositionally biased region" description="Polar residues" evidence="2">
    <location>
        <begin position="1"/>
        <end position="30"/>
    </location>
</feature>
<feature type="sequence conflict" description="In Ref. 1; AAB66554." evidence="5" ref="1">
    <original>K</original>
    <variation>R</variation>
    <location>
        <position position="388"/>
    </location>
</feature>
<gene>
    <name type="primary">vacB</name>
    <name type="ORF">DDB_G0279191</name>
</gene>
<comment type="function">
    <text evidence="3 4">Negative regulator of late steps of the endocytic pathway.</text>
</comment>
<comment type="subunit">
    <text evidence="6">Homotrimer.</text>
</comment>
<comment type="subcellular location">
    <subcellularLocation>
        <location>Endosome membrane</location>
        <topology>Peripheral membrane protein</topology>
    </subcellularLocation>
    <subcellularLocation>
        <location>Lysosome membrane</location>
        <topology>Peripheral membrane protein</topology>
    </subcellularLocation>
    <text>Post-lysosome.</text>
</comment>
<comment type="developmental stage">
    <text>Expression restricted to vegetative phase.</text>
</comment>
<comment type="domain">
    <text evidence="3">The coiled-coil region is essential for oligomerization and binding to vacuolar structures.</text>
</comment>
<comment type="similarity">
    <text evidence="5">Belongs to the vacuolin family.</text>
</comment>
<dbReference type="EMBL" id="AF014050">
    <property type="protein sequence ID" value="AAB66554.1"/>
    <property type="molecule type" value="mRNA"/>
</dbReference>
<dbReference type="EMBL" id="AAFI02000030">
    <property type="protein sequence ID" value="EAL67744.1"/>
    <property type="molecule type" value="Genomic_DNA"/>
</dbReference>
<dbReference type="RefSeq" id="XP_641785.1">
    <property type="nucleotide sequence ID" value="XM_636693.1"/>
</dbReference>
<dbReference type="FunCoup" id="Q54WZ2">
    <property type="interactions" value="11"/>
</dbReference>
<dbReference type="STRING" id="44689.Q54WZ2"/>
<dbReference type="PaxDb" id="44689-DDB0214913"/>
<dbReference type="ABCD" id="Q54WZ2">
    <property type="antibodies" value="4 sequenced antibodies"/>
</dbReference>
<dbReference type="EnsemblProtists" id="EAL67744">
    <property type="protein sequence ID" value="EAL67744"/>
    <property type="gene ID" value="DDB_G0279191"/>
</dbReference>
<dbReference type="GeneID" id="8621982"/>
<dbReference type="KEGG" id="ddi:DDB_G0279191"/>
<dbReference type="dictyBase" id="DDB_G0279191">
    <property type="gene designation" value="vacB"/>
</dbReference>
<dbReference type="VEuPathDB" id="AmoebaDB:DDB_G0279191"/>
<dbReference type="eggNOG" id="ENOG502S9G3">
    <property type="taxonomic scope" value="Eukaryota"/>
</dbReference>
<dbReference type="HOGENOM" id="CLU_461128_0_0_1"/>
<dbReference type="InParanoid" id="Q54WZ2"/>
<dbReference type="OMA" id="EHENGDQ"/>
<dbReference type="PhylomeDB" id="Q54WZ2"/>
<dbReference type="PRO" id="PR:Q54WZ2"/>
<dbReference type="Proteomes" id="UP000002195">
    <property type="component" value="Chromosome 3"/>
</dbReference>
<dbReference type="GO" id="GO:0032009">
    <property type="term" value="C:early phagosome"/>
    <property type="evidence" value="ECO:0000314"/>
    <property type="project" value="dictyBase"/>
</dbReference>
<dbReference type="GO" id="GO:0010008">
    <property type="term" value="C:endosome membrane"/>
    <property type="evidence" value="ECO:0007669"/>
    <property type="project" value="UniProtKB-SubCell"/>
</dbReference>
<dbReference type="GO" id="GO:0005765">
    <property type="term" value="C:lysosomal membrane"/>
    <property type="evidence" value="ECO:0007669"/>
    <property type="project" value="UniProtKB-SubCell"/>
</dbReference>
<dbReference type="GO" id="GO:0016020">
    <property type="term" value="C:membrane"/>
    <property type="evidence" value="ECO:0000314"/>
    <property type="project" value="dictyBase"/>
</dbReference>
<dbReference type="GO" id="GO:0045121">
    <property type="term" value="C:membrane raft"/>
    <property type="evidence" value="ECO:0000314"/>
    <property type="project" value="dictyBase"/>
</dbReference>
<dbReference type="GO" id="GO:0045335">
    <property type="term" value="C:phagocytic vesicle"/>
    <property type="evidence" value="ECO:0007005"/>
    <property type="project" value="dictyBase"/>
</dbReference>
<dbReference type="GO" id="GO:0005886">
    <property type="term" value="C:plasma membrane"/>
    <property type="evidence" value="ECO:0000314"/>
    <property type="project" value="dictyBase"/>
</dbReference>
<dbReference type="GO" id="GO:0005773">
    <property type="term" value="C:vacuole"/>
    <property type="evidence" value="ECO:0000314"/>
    <property type="project" value="dictyBase"/>
</dbReference>
<dbReference type="GO" id="GO:0061951">
    <property type="term" value="P:establishment of protein localization to plasma membrane"/>
    <property type="evidence" value="ECO:0000316"/>
    <property type="project" value="dictyBase"/>
</dbReference>
<dbReference type="GO" id="GO:0006887">
    <property type="term" value="P:exocytosis"/>
    <property type="evidence" value="ECO:0000315"/>
    <property type="project" value="dictyBase"/>
</dbReference>
<dbReference type="GO" id="GO:0006910">
    <property type="term" value="P:phagocytosis, recognition"/>
    <property type="evidence" value="ECO:0000316"/>
    <property type="project" value="dictyBase"/>
</dbReference>
<dbReference type="GO" id="GO:0090382">
    <property type="term" value="P:phagosome maturation"/>
    <property type="evidence" value="ECO:0000316"/>
    <property type="project" value="dictyBase"/>
</dbReference>
<dbReference type="GO" id="GO:0006355">
    <property type="term" value="P:regulation of DNA-templated transcription"/>
    <property type="evidence" value="ECO:0000316"/>
    <property type="project" value="dictyBase"/>
</dbReference>
<dbReference type="GO" id="GO:0009617">
    <property type="term" value="P:response to bacterium"/>
    <property type="evidence" value="ECO:0000315"/>
    <property type="project" value="dictyBase"/>
</dbReference>
<dbReference type="CDD" id="cd02106">
    <property type="entry name" value="SPFH_like"/>
    <property type="match status" value="1"/>
</dbReference>
<dbReference type="FunFam" id="3.30.479.30:FF:000028">
    <property type="entry name" value="Vacuolin-A"/>
    <property type="match status" value="1"/>
</dbReference>
<dbReference type="Gene3D" id="3.30.479.30">
    <property type="entry name" value="Band 7 domain"/>
    <property type="match status" value="1"/>
</dbReference>
<dbReference type="InterPro" id="IPR001107">
    <property type="entry name" value="Band_7"/>
</dbReference>
<dbReference type="InterPro" id="IPR036013">
    <property type="entry name" value="Band_7/SPFH_dom_sf"/>
</dbReference>
<dbReference type="Pfam" id="PF01145">
    <property type="entry name" value="Band_7"/>
    <property type="match status" value="1"/>
</dbReference>
<dbReference type="SUPFAM" id="SSF117892">
    <property type="entry name" value="Band 7/SPFH domain"/>
    <property type="match status" value="1"/>
</dbReference>
<sequence>MIESSSFMKKTSSENSIGSRSNIHEASTFSSEHENGDQSLTISQIVIRSDFANETSERQSKIILERFNEGIKNTAFTDSPVLGRAQPRLDVSYFAMAHRNQIVELFDPRGQRFGTVYSADPTVEIRYLGSVAKTCRYFGSFGKHVLNVPSGHFAKAMTKNRPIIYGEGPHVIIDPTFEFDERYGFVNQQEPFINHSTINILRVPSGKVAKVWIGTQPLILESRREPYVFVDAQFKMVEDTSESGNNKYFKNSSATFMEHGSIKRIIPHTGEVAITYNNGILTIIPPPKDGKPVIIDSPTHNFEGFIQTSLQTCLFPSKETKQQAIKDNKNATSDEVNLKIFQTRDSLRVGVVLVVAFRIVDPEIALTKLGKEGIINHIENVSFADMGKAIQLSTLQEIMYFNDTKPSANSTNETVHTIQDRVKSHLARDLCEYGIELARLQIETMKVLDSEIAKKLAGQSVTSAEFTTKQATLVKEYDIKTTEARLKAETDNIALEQKGKAIIAEAQAKLESAQKQAQALLITAEAQKKVQEMQGELFTKYPILAEIELAKIKSEALKSATLYITPQDAGNFMNSPLVYMDRLLGHQQKLEK</sequence>
<protein>
    <recommendedName>
        <fullName>Vacuolin-B</fullName>
    </recommendedName>
</protein>
<organism>
    <name type="scientific">Dictyostelium discoideum</name>
    <name type="common">Social amoeba</name>
    <dbReference type="NCBI Taxonomy" id="44689"/>
    <lineage>
        <taxon>Eukaryota</taxon>
        <taxon>Amoebozoa</taxon>
        <taxon>Evosea</taxon>
        <taxon>Eumycetozoa</taxon>
        <taxon>Dictyostelia</taxon>
        <taxon>Dictyosteliales</taxon>
        <taxon>Dictyosteliaceae</taxon>
        <taxon>Dictyostelium</taxon>
    </lineage>
</organism>
<keyword id="KW-0175">Coiled coil</keyword>
<keyword id="KW-0967">Endosome</keyword>
<keyword id="KW-0458">Lysosome</keyword>
<keyword id="KW-0472">Membrane</keyword>
<keyword id="KW-1185">Reference proteome</keyword>
<name>VACB_DICDI</name>
<evidence type="ECO:0000255" key="1"/>
<evidence type="ECO:0000256" key="2">
    <source>
        <dbReference type="SAM" id="MobiDB-lite"/>
    </source>
</evidence>
<evidence type="ECO:0000269" key="3">
    <source>
    </source>
</evidence>
<evidence type="ECO:0000269" key="4">
    <source>
    </source>
</evidence>
<evidence type="ECO:0000305" key="5"/>
<evidence type="ECO:0000305" key="6">
    <source>
    </source>
</evidence>
<accession>Q54WZ2</accession>
<accession>O15707</accession>
<reference key="1">
    <citation type="journal article" date="1998" name="J. Cell Sci.">
        <title>Targeted gene disruption reveals a role for vacuolin B in the late endocytic pathway and exocytosis.</title>
        <authorList>
            <person name="Jenne N."/>
            <person name="Rauchenberger R."/>
            <person name="Hacker U."/>
            <person name="Kast T."/>
            <person name="Maniak M."/>
        </authorList>
    </citation>
    <scope>NUCLEOTIDE SEQUENCE [MRNA]</scope>
    <scope>FUNCTION</scope>
    <scope>SUBCELLULAR LOCATION</scope>
    <source>
        <strain>AX2</strain>
    </source>
</reference>
<reference key="2">
    <citation type="journal article" date="2005" name="Nature">
        <title>The genome of the social amoeba Dictyostelium discoideum.</title>
        <authorList>
            <person name="Eichinger L."/>
            <person name="Pachebat J.A."/>
            <person name="Gloeckner G."/>
            <person name="Rajandream M.A."/>
            <person name="Sucgang R."/>
            <person name="Berriman M."/>
            <person name="Song J."/>
            <person name="Olsen R."/>
            <person name="Szafranski K."/>
            <person name="Xu Q."/>
            <person name="Tunggal B."/>
            <person name="Kummerfeld S."/>
            <person name="Madera M."/>
            <person name="Konfortov B.A."/>
            <person name="Rivero F."/>
            <person name="Bankier A.T."/>
            <person name="Lehmann R."/>
            <person name="Hamlin N."/>
            <person name="Davies R."/>
            <person name="Gaudet P."/>
            <person name="Fey P."/>
            <person name="Pilcher K."/>
            <person name="Chen G."/>
            <person name="Saunders D."/>
            <person name="Sodergren E.J."/>
            <person name="Davis P."/>
            <person name="Kerhornou A."/>
            <person name="Nie X."/>
            <person name="Hall N."/>
            <person name="Anjard C."/>
            <person name="Hemphill L."/>
            <person name="Bason N."/>
            <person name="Farbrother P."/>
            <person name="Desany B."/>
            <person name="Just E."/>
            <person name="Morio T."/>
            <person name="Rost R."/>
            <person name="Churcher C.M."/>
            <person name="Cooper J."/>
            <person name="Haydock S."/>
            <person name="van Driessche N."/>
            <person name="Cronin A."/>
            <person name="Goodhead I."/>
            <person name="Muzny D.M."/>
            <person name="Mourier T."/>
            <person name="Pain A."/>
            <person name="Lu M."/>
            <person name="Harper D."/>
            <person name="Lindsay R."/>
            <person name="Hauser H."/>
            <person name="James K.D."/>
            <person name="Quiles M."/>
            <person name="Madan Babu M."/>
            <person name="Saito T."/>
            <person name="Buchrieser C."/>
            <person name="Wardroper A."/>
            <person name="Felder M."/>
            <person name="Thangavelu M."/>
            <person name="Johnson D."/>
            <person name="Knights A."/>
            <person name="Loulseged H."/>
            <person name="Mungall K.L."/>
            <person name="Oliver K."/>
            <person name="Price C."/>
            <person name="Quail M.A."/>
            <person name="Urushihara H."/>
            <person name="Hernandez J."/>
            <person name="Rabbinowitsch E."/>
            <person name="Steffen D."/>
            <person name="Sanders M."/>
            <person name="Ma J."/>
            <person name="Kohara Y."/>
            <person name="Sharp S."/>
            <person name="Simmonds M.N."/>
            <person name="Spiegler S."/>
            <person name="Tivey A."/>
            <person name="Sugano S."/>
            <person name="White B."/>
            <person name="Walker D."/>
            <person name="Woodward J.R."/>
            <person name="Winckler T."/>
            <person name="Tanaka Y."/>
            <person name="Shaulsky G."/>
            <person name="Schleicher M."/>
            <person name="Weinstock G.M."/>
            <person name="Rosenthal A."/>
            <person name="Cox E.C."/>
            <person name="Chisholm R.L."/>
            <person name="Gibbs R.A."/>
            <person name="Loomis W.F."/>
            <person name="Platzer M."/>
            <person name="Kay R.R."/>
            <person name="Williams J.G."/>
            <person name="Dear P.H."/>
            <person name="Noegel A.A."/>
            <person name="Barrell B.G."/>
            <person name="Kuspa A."/>
        </authorList>
    </citation>
    <scope>NUCLEOTIDE SEQUENCE [LARGE SCALE GENOMIC DNA]</scope>
    <source>
        <strain>AX4</strain>
    </source>
</reference>
<reference key="3">
    <citation type="journal article" date="2006" name="Eur. J. Cell Biol.">
        <title>Vacuolin, a flotillin/reggie-related protein from Dictyostelium oligomerizes for endosome association.</title>
        <authorList>
            <person name="Wienke D."/>
            <person name="Drengk A."/>
            <person name="Schmauch C."/>
            <person name="Jenne N."/>
            <person name="Maniak M."/>
        </authorList>
    </citation>
    <scope>FUNCTION</scope>
    <scope>DOMAIN</scope>
    <scope>SUBUNIT</scope>
    <scope>SUBCELLULAR LOCATION</scope>
</reference>
<reference key="4">
    <citation type="journal article" date="2006" name="Mol. Cell. Proteomics">
        <title>Proteomics fingerprinting of phagosome maturation and evidence for the role of a Galpha during uptake.</title>
        <authorList>
            <person name="Gotthardt D."/>
            <person name="Blancheteau V."/>
            <person name="Bosserhoff A."/>
            <person name="Ruppert T."/>
            <person name="Delorenzi M."/>
            <person name="Soldati T."/>
        </authorList>
    </citation>
    <scope>IDENTIFICATION BY MASS SPECTROMETRY [LARGE SCALE ANALYSIS]</scope>
    <source>
        <strain>AX2</strain>
    </source>
</reference>
<proteinExistence type="evidence at protein level"/>